<gene>
    <name type="primary">hxuB</name>
    <name type="ordered locus">HI_0263</name>
</gene>
<keyword id="KW-0998">Cell outer membrane</keyword>
<keyword id="KW-0406">Ion transport</keyword>
<keyword id="KW-0472">Membrane</keyword>
<keyword id="KW-0626">Porin</keyword>
<keyword id="KW-0653">Protein transport</keyword>
<keyword id="KW-1185">Reference proteome</keyword>
<keyword id="KW-0732">Signal</keyword>
<keyword id="KW-0812">Transmembrane</keyword>
<keyword id="KW-1134">Transmembrane beta strand</keyword>
<keyword id="KW-0813">Transport</keyword>
<name>HXUB1_HAEIN</name>
<comment type="function">
    <text evidence="1">Likely functions in the release of soluble HxuA from the cell.</text>
</comment>
<comment type="function">
    <text evidence="1">Probable member of a two partner secretion pathway (TPS) in which it mediates the secretion of HuxA.</text>
</comment>
<comment type="subcellular location">
    <subcellularLocation>
        <location>Cell outer membrane</location>
    </subcellularLocation>
</comment>
<comment type="domain">
    <text evidence="1">Probably a beta-barrel protein.</text>
</comment>
<comment type="similarity">
    <text evidence="3">Belongs to the TPS (TC 1.B.20) family.</text>
</comment>
<accession>P44601</accession>
<sequence length="565" mass="62824">MKMRPRYSVIASAVSLGFVLSKSVMALDRPDTGSLNRELEQRQIQSEAKPSGELFNQTANSPYTAQYKQGLKFPLKQVQILDRNNQEVVTDELAHILKNYVGKEVSLSDLSNLANEISEFYRHNNYLVAKAILPPQEIEQGTVKILLLKGNVGEIRLQNHSALSNKFVSRLSNTTVNASEFILKDELEKFALTINDVPGVNAGLQLSAGKKVGEANLLIKINDAKRFSSYVSVDNQGNKYTGRYRLAAGTKVSNLNGWGDELKLDLMSSNQANLKNARIDYSSLIDGYSTRFGVTANYLDYKLGGNFKSLQSQGHSHTLGAYLLHPTIRTPNFRLSTKVSFNHQNLTDKQQAVYVKQKRKINSLTAGIDGSWNLIKDGTTYFSLSTLFGNLANQTSEKKQYTKEDFQPQSHFTVYNYRLSHEQILPKSFAFNIGINGQFADKTLESSQKMLLGGLSGVRGHQAGAASVDEGHLIQTEFKHYLPVFSQSVLVSSLFYDYGLGKYYKNSQFLEKGVKNSVKLQSVGAGLSLSDAGSYAINVSVAKPLDNNINNADKHQFWLSMIKTF</sequence>
<organism>
    <name type="scientific">Haemophilus influenzae (strain ATCC 51907 / DSM 11121 / KW20 / Rd)</name>
    <dbReference type="NCBI Taxonomy" id="71421"/>
    <lineage>
        <taxon>Bacteria</taxon>
        <taxon>Pseudomonadati</taxon>
        <taxon>Pseudomonadota</taxon>
        <taxon>Gammaproteobacteria</taxon>
        <taxon>Pasteurellales</taxon>
        <taxon>Pasteurellaceae</taxon>
        <taxon>Haemophilus</taxon>
    </lineage>
</organism>
<protein>
    <recommendedName>
        <fullName>Heme/hemopexin transporter protein HuxB</fullName>
    </recommendedName>
</protein>
<feature type="signal peptide" evidence="1">
    <location>
        <begin position="1"/>
        <end position="26"/>
    </location>
</feature>
<feature type="chain" id="PRO_0000021470" description="Heme/hemopexin transporter protein HuxB">
    <location>
        <begin position="27"/>
        <end position="565"/>
    </location>
</feature>
<feature type="domain" description="POTRA" evidence="2">
    <location>
        <begin position="73"/>
        <end position="150"/>
    </location>
</feature>
<evidence type="ECO:0000250" key="1"/>
<evidence type="ECO:0000255" key="2">
    <source>
        <dbReference type="PROSITE-ProRule" id="PRU01115"/>
    </source>
</evidence>
<evidence type="ECO:0000305" key="3"/>
<reference key="1">
    <citation type="journal article" date="1995" name="Science">
        <title>Whole-genome random sequencing and assembly of Haemophilus influenzae Rd.</title>
        <authorList>
            <person name="Fleischmann R.D."/>
            <person name="Adams M.D."/>
            <person name="White O."/>
            <person name="Clayton R.A."/>
            <person name="Kirkness E.F."/>
            <person name="Kerlavage A.R."/>
            <person name="Bult C.J."/>
            <person name="Tomb J.-F."/>
            <person name="Dougherty B.A."/>
            <person name="Merrick J.M."/>
            <person name="McKenney K."/>
            <person name="Sutton G.G."/>
            <person name="FitzHugh W."/>
            <person name="Fields C.A."/>
            <person name="Gocayne J.D."/>
            <person name="Scott J.D."/>
            <person name="Shirley R."/>
            <person name="Liu L.-I."/>
            <person name="Glodek A."/>
            <person name="Kelley J.M."/>
            <person name="Weidman J.F."/>
            <person name="Phillips C.A."/>
            <person name="Spriggs T."/>
            <person name="Hedblom E."/>
            <person name="Cotton M.D."/>
            <person name="Utterback T.R."/>
            <person name="Hanna M.C."/>
            <person name="Nguyen D.T."/>
            <person name="Saudek D.M."/>
            <person name="Brandon R.C."/>
            <person name="Fine L.D."/>
            <person name="Fritchman J.L."/>
            <person name="Fuhrmann J.L."/>
            <person name="Geoghagen N.S.M."/>
            <person name="Gnehm C.L."/>
            <person name="McDonald L.A."/>
            <person name="Small K.V."/>
            <person name="Fraser C.M."/>
            <person name="Smith H.O."/>
            <person name="Venter J.C."/>
        </authorList>
    </citation>
    <scope>NUCLEOTIDE SEQUENCE [LARGE SCALE GENOMIC DNA]</scope>
    <source>
        <strain>ATCC 51907 / DSM 11121 / KW20 / Rd</strain>
    </source>
</reference>
<proteinExistence type="inferred from homology"/>
<dbReference type="EMBL" id="L42023">
    <property type="protein sequence ID" value="AAC21928.1"/>
    <property type="molecule type" value="Genomic_DNA"/>
</dbReference>
<dbReference type="PIR" id="D64058">
    <property type="entry name" value="D64058"/>
</dbReference>
<dbReference type="RefSeq" id="NP_438432.1">
    <property type="nucleotide sequence ID" value="NC_000907.1"/>
</dbReference>
<dbReference type="SMR" id="P44601"/>
<dbReference type="STRING" id="71421.HI_0263"/>
<dbReference type="EnsemblBacteria" id="AAC21928">
    <property type="protein sequence ID" value="AAC21928"/>
    <property type="gene ID" value="HI_0263"/>
</dbReference>
<dbReference type="KEGG" id="hin:HI_0263"/>
<dbReference type="PATRIC" id="fig|71421.8.peg.278"/>
<dbReference type="eggNOG" id="COG2831">
    <property type="taxonomic scope" value="Bacteria"/>
</dbReference>
<dbReference type="HOGENOM" id="CLU_021521_2_2_6"/>
<dbReference type="OrthoDB" id="572300at2"/>
<dbReference type="PhylomeDB" id="P44601"/>
<dbReference type="BioCyc" id="HINF71421:G1GJ1-278-MONOMER"/>
<dbReference type="Proteomes" id="UP000000579">
    <property type="component" value="Chromosome"/>
</dbReference>
<dbReference type="GO" id="GO:0009279">
    <property type="term" value="C:cell outer membrane"/>
    <property type="evidence" value="ECO:0007669"/>
    <property type="project" value="UniProtKB-SubCell"/>
</dbReference>
<dbReference type="GO" id="GO:0046930">
    <property type="term" value="C:pore complex"/>
    <property type="evidence" value="ECO:0007669"/>
    <property type="project" value="UniProtKB-KW"/>
</dbReference>
<dbReference type="GO" id="GO:0098046">
    <property type="term" value="C:type V protein secretion system complex"/>
    <property type="evidence" value="ECO:0000318"/>
    <property type="project" value="GO_Central"/>
</dbReference>
<dbReference type="GO" id="GO:0015288">
    <property type="term" value="F:porin activity"/>
    <property type="evidence" value="ECO:0007669"/>
    <property type="project" value="UniProtKB-KW"/>
</dbReference>
<dbReference type="GO" id="GO:0008320">
    <property type="term" value="F:protein transmembrane transporter activity"/>
    <property type="evidence" value="ECO:0000318"/>
    <property type="project" value="GO_Central"/>
</dbReference>
<dbReference type="GO" id="GO:0006811">
    <property type="term" value="P:monoatomic ion transport"/>
    <property type="evidence" value="ECO:0007669"/>
    <property type="project" value="UniProtKB-KW"/>
</dbReference>
<dbReference type="GO" id="GO:0046819">
    <property type="term" value="P:protein secretion by the type V secretion system"/>
    <property type="evidence" value="ECO:0000318"/>
    <property type="project" value="GO_Central"/>
</dbReference>
<dbReference type="FunFam" id="2.40.160.50:FF:000028">
    <property type="entry name" value="Heme/hemopexin transporter protein HuxB"/>
    <property type="match status" value="1"/>
</dbReference>
<dbReference type="Gene3D" id="3.10.20.310">
    <property type="entry name" value="membrane protein fhac"/>
    <property type="match status" value="1"/>
</dbReference>
<dbReference type="Gene3D" id="2.40.160.50">
    <property type="entry name" value="membrane protein fhac: a member of the omp85/tpsb transporter family"/>
    <property type="match status" value="1"/>
</dbReference>
<dbReference type="InterPro" id="IPR005565">
    <property type="entry name" value="Hemolysn_activator_HlyB_C"/>
</dbReference>
<dbReference type="InterPro" id="IPR013686">
    <property type="entry name" value="Polypept-transport_assoc_ShlB"/>
</dbReference>
<dbReference type="InterPro" id="IPR034746">
    <property type="entry name" value="POTRA"/>
</dbReference>
<dbReference type="InterPro" id="IPR051544">
    <property type="entry name" value="TPS_OM_transporter"/>
</dbReference>
<dbReference type="PANTHER" id="PTHR34597:SF1">
    <property type="entry name" value="HEME_HEMOPEXIN TRANSPORTER PROTEIN HUXB"/>
    <property type="match status" value="1"/>
</dbReference>
<dbReference type="PANTHER" id="PTHR34597">
    <property type="entry name" value="SLR1661 PROTEIN"/>
    <property type="match status" value="1"/>
</dbReference>
<dbReference type="Pfam" id="PF08479">
    <property type="entry name" value="POTRA_2"/>
    <property type="match status" value="1"/>
</dbReference>
<dbReference type="Pfam" id="PF03865">
    <property type="entry name" value="ShlB"/>
    <property type="match status" value="1"/>
</dbReference>
<dbReference type="PROSITE" id="PS51779">
    <property type="entry name" value="POTRA"/>
    <property type="match status" value="1"/>
</dbReference>